<reference key="1">
    <citation type="journal article" date="2006" name="Mol. Microbiol.">
        <title>Role of pathogenicity island-associated integrases in the genome plasticity of uropathogenic Escherichia coli strain 536.</title>
        <authorList>
            <person name="Hochhut B."/>
            <person name="Wilde C."/>
            <person name="Balling G."/>
            <person name="Middendorf B."/>
            <person name="Dobrindt U."/>
            <person name="Brzuszkiewicz E."/>
            <person name="Gottschalk G."/>
            <person name="Carniel E."/>
            <person name="Hacker J."/>
        </authorList>
    </citation>
    <scope>NUCLEOTIDE SEQUENCE [LARGE SCALE GENOMIC DNA]</scope>
    <source>
        <strain>536 / UPEC</strain>
    </source>
</reference>
<evidence type="ECO:0000255" key="1">
    <source>
        <dbReference type="HAMAP-Rule" id="MF_01200"/>
    </source>
</evidence>
<comment type="function">
    <text evidence="1">Catalyzes the decarboxylation of orotidine 5'-monophosphate (OMP) to uridine 5'-monophosphate (UMP).</text>
</comment>
<comment type="catalytic activity">
    <reaction evidence="1">
        <text>orotidine 5'-phosphate + H(+) = UMP + CO2</text>
        <dbReference type="Rhea" id="RHEA:11596"/>
        <dbReference type="ChEBI" id="CHEBI:15378"/>
        <dbReference type="ChEBI" id="CHEBI:16526"/>
        <dbReference type="ChEBI" id="CHEBI:57538"/>
        <dbReference type="ChEBI" id="CHEBI:57865"/>
        <dbReference type="EC" id="4.1.1.23"/>
    </reaction>
</comment>
<comment type="pathway">
    <text evidence="1">Pyrimidine metabolism; UMP biosynthesis via de novo pathway; UMP from orotate: step 2/2.</text>
</comment>
<comment type="subunit">
    <text evidence="1">Homodimer.</text>
</comment>
<comment type="similarity">
    <text evidence="1">Belongs to the OMP decarboxylase family. Type 1 subfamily.</text>
</comment>
<keyword id="KW-0210">Decarboxylase</keyword>
<keyword id="KW-0456">Lyase</keyword>
<keyword id="KW-0665">Pyrimidine biosynthesis</keyword>
<proteinExistence type="inferred from homology"/>
<name>PYRF_ECOL5</name>
<protein>
    <recommendedName>
        <fullName evidence="1">Orotidine 5'-phosphate decarboxylase</fullName>
        <ecNumber evidence="1">4.1.1.23</ecNumber>
    </recommendedName>
    <alternativeName>
        <fullName evidence="1">OMP decarboxylase</fullName>
        <shortName evidence="1">OMPDCase</shortName>
        <shortName evidence="1">OMPdecase</shortName>
    </alternativeName>
</protein>
<sequence>MTLTASSSSRAVTNSPVVVALDYHNRDAAMAFVDKIDPRDCRLKVGKEMFTLFGPQFVSELQQRGFDIFLDLKFHDIPNTAAHAVAAAADLGVWMVNVHASGGARMMAAAREALVPFGKDAPLLIAVTVLTSMEASDLADLGVTLSPADYAERLAALTQKCGLDGVVCSAQEAVRFKQVFGQEFKLVTPGIRPQGSDAGDQRRIMTPEQALAAGVDYMVIGRPVTQSVDPAQTLKAINASLQRSA</sequence>
<accession>Q0TI84</accession>
<gene>
    <name evidence="1" type="primary">pyrF</name>
    <name type="ordered locus">ECP_1334</name>
</gene>
<organism>
    <name type="scientific">Escherichia coli O6:K15:H31 (strain 536 / UPEC)</name>
    <dbReference type="NCBI Taxonomy" id="362663"/>
    <lineage>
        <taxon>Bacteria</taxon>
        <taxon>Pseudomonadati</taxon>
        <taxon>Pseudomonadota</taxon>
        <taxon>Gammaproteobacteria</taxon>
        <taxon>Enterobacterales</taxon>
        <taxon>Enterobacteriaceae</taxon>
        <taxon>Escherichia</taxon>
    </lineage>
</organism>
<dbReference type="EC" id="4.1.1.23" evidence="1"/>
<dbReference type="EMBL" id="CP000247">
    <property type="protein sequence ID" value="ABG69345.1"/>
    <property type="molecule type" value="Genomic_DNA"/>
</dbReference>
<dbReference type="RefSeq" id="WP_001346952.1">
    <property type="nucleotide sequence ID" value="NC_008253.1"/>
</dbReference>
<dbReference type="SMR" id="Q0TI84"/>
<dbReference type="KEGG" id="ecp:ECP_1334"/>
<dbReference type="HOGENOM" id="CLU_067069_0_0_6"/>
<dbReference type="UniPathway" id="UPA00070">
    <property type="reaction ID" value="UER00120"/>
</dbReference>
<dbReference type="Proteomes" id="UP000009182">
    <property type="component" value="Chromosome"/>
</dbReference>
<dbReference type="GO" id="GO:0005829">
    <property type="term" value="C:cytosol"/>
    <property type="evidence" value="ECO:0007669"/>
    <property type="project" value="TreeGrafter"/>
</dbReference>
<dbReference type="GO" id="GO:0004590">
    <property type="term" value="F:orotidine-5'-phosphate decarboxylase activity"/>
    <property type="evidence" value="ECO:0007669"/>
    <property type="project" value="UniProtKB-UniRule"/>
</dbReference>
<dbReference type="GO" id="GO:0006207">
    <property type="term" value="P:'de novo' pyrimidine nucleobase biosynthetic process"/>
    <property type="evidence" value="ECO:0007669"/>
    <property type="project" value="InterPro"/>
</dbReference>
<dbReference type="GO" id="GO:0044205">
    <property type="term" value="P:'de novo' UMP biosynthetic process"/>
    <property type="evidence" value="ECO:0007669"/>
    <property type="project" value="UniProtKB-UniRule"/>
</dbReference>
<dbReference type="CDD" id="cd04725">
    <property type="entry name" value="OMP_decarboxylase_like"/>
    <property type="match status" value="1"/>
</dbReference>
<dbReference type="FunFam" id="3.20.20.70:FF:000015">
    <property type="entry name" value="Orotidine 5'-phosphate decarboxylase"/>
    <property type="match status" value="1"/>
</dbReference>
<dbReference type="Gene3D" id="3.20.20.70">
    <property type="entry name" value="Aldolase class I"/>
    <property type="match status" value="1"/>
</dbReference>
<dbReference type="HAMAP" id="MF_01200_B">
    <property type="entry name" value="OMPdecase_type1_B"/>
    <property type="match status" value="1"/>
</dbReference>
<dbReference type="InterPro" id="IPR013785">
    <property type="entry name" value="Aldolase_TIM"/>
</dbReference>
<dbReference type="InterPro" id="IPR014732">
    <property type="entry name" value="OMPdecase"/>
</dbReference>
<dbReference type="InterPro" id="IPR018089">
    <property type="entry name" value="OMPdecase_AS"/>
</dbReference>
<dbReference type="InterPro" id="IPR047596">
    <property type="entry name" value="OMPdecase_bac"/>
</dbReference>
<dbReference type="InterPro" id="IPR001754">
    <property type="entry name" value="OMPdeCOase_dom"/>
</dbReference>
<dbReference type="InterPro" id="IPR011060">
    <property type="entry name" value="RibuloseP-bd_barrel"/>
</dbReference>
<dbReference type="NCBIfam" id="NF001273">
    <property type="entry name" value="PRK00230.1"/>
    <property type="match status" value="1"/>
</dbReference>
<dbReference type="NCBIfam" id="TIGR01740">
    <property type="entry name" value="pyrF"/>
    <property type="match status" value="1"/>
</dbReference>
<dbReference type="PANTHER" id="PTHR32119">
    <property type="entry name" value="OROTIDINE 5'-PHOSPHATE DECARBOXYLASE"/>
    <property type="match status" value="1"/>
</dbReference>
<dbReference type="PANTHER" id="PTHR32119:SF2">
    <property type="entry name" value="OROTIDINE 5'-PHOSPHATE DECARBOXYLASE"/>
    <property type="match status" value="1"/>
</dbReference>
<dbReference type="Pfam" id="PF00215">
    <property type="entry name" value="OMPdecase"/>
    <property type="match status" value="1"/>
</dbReference>
<dbReference type="SMART" id="SM00934">
    <property type="entry name" value="OMPdecase"/>
    <property type="match status" value="1"/>
</dbReference>
<dbReference type="SUPFAM" id="SSF51366">
    <property type="entry name" value="Ribulose-phoshate binding barrel"/>
    <property type="match status" value="1"/>
</dbReference>
<dbReference type="PROSITE" id="PS00156">
    <property type="entry name" value="OMPDECASE"/>
    <property type="match status" value="1"/>
</dbReference>
<feature type="chain" id="PRO_1000065906" description="Orotidine 5'-phosphate decarboxylase">
    <location>
        <begin position="1"/>
        <end position="245"/>
    </location>
</feature>
<feature type="active site" description="Proton donor" evidence="1">
    <location>
        <position position="73"/>
    </location>
</feature>
<feature type="binding site" evidence="1">
    <location>
        <position position="22"/>
    </location>
    <ligand>
        <name>substrate</name>
    </ligand>
</feature>
<feature type="binding site" evidence="1">
    <location>
        <position position="44"/>
    </location>
    <ligand>
        <name>substrate</name>
    </ligand>
</feature>
<feature type="binding site" evidence="1">
    <location>
        <begin position="71"/>
        <end position="80"/>
    </location>
    <ligand>
        <name>substrate</name>
    </ligand>
</feature>
<feature type="binding site" evidence="1">
    <location>
        <position position="131"/>
    </location>
    <ligand>
        <name>substrate</name>
    </ligand>
</feature>
<feature type="binding site" evidence="1">
    <location>
        <position position="192"/>
    </location>
    <ligand>
        <name>substrate</name>
    </ligand>
</feature>
<feature type="binding site" evidence="1">
    <location>
        <position position="201"/>
    </location>
    <ligand>
        <name>substrate</name>
    </ligand>
</feature>
<feature type="binding site" evidence="1">
    <location>
        <position position="221"/>
    </location>
    <ligand>
        <name>substrate</name>
    </ligand>
</feature>
<feature type="binding site" evidence="1">
    <location>
        <position position="222"/>
    </location>
    <ligand>
        <name>substrate</name>
    </ligand>
</feature>